<gene>
    <name evidence="1" type="primary">rpsT</name>
    <name type="ordered locus">SAHV_1573</name>
</gene>
<evidence type="ECO:0000255" key="1">
    <source>
        <dbReference type="HAMAP-Rule" id="MF_00500"/>
    </source>
</evidence>
<evidence type="ECO:0000305" key="2"/>
<feature type="chain" id="PRO_1000126515" description="Small ribosomal subunit protein bS20">
    <location>
        <begin position="1"/>
        <end position="83"/>
    </location>
</feature>
<comment type="function">
    <text evidence="1">Binds directly to 16S ribosomal RNA.</text>
</comment>
<comment type="similarity">
    <text evidence="1">Belongs to the bacterial ribosomal protein bS20 family.</text>
</comment>
<protein>
    <recommendedName>
        <fullName evidence="1">Small ribosomal subunit protein bS20</fullName>
    </recommendedName>
    <alternativeName>
        <fullName evidence="2">30S ribosomal protein S20</fullName>
    </alternativeName>
</protein>
<accession>A7X2Y8</accession>
<keyword id="KW-0687">Ribonucleoprotein</keyword>
<keyword id="KW-0689">Ribosomal protein</keyword>
<keyword id="KW-0694">RNA-binding</keyword>
<keyword id="KW-0699">rRNA-binding</keyword>
<organism>
    <name type="scientific">Staphylococcus aureus (strain Mu3 / ATCC 700698)</name>
    <dbReference type="NCBI Taxonomy" id="418127"/>
    <lineage>
        <taxon>Bacteria</taxon>
        <taxon>Bacillati</taxon>
        <taxon>Bacillota</taxon>
        <taxon>Bacilli</taxon>
        <taxon>Bacillales</taxon>
        <taxon>Staphylococcaceae</taxon>
        <taxon>Staphylococcus</taxon>
    </lineage>
</organism>
<sequence>MANIKSAIKRVKTTEKAEARNISQKSAMRTAVKNAKTAVSNNADNKNELVSLAVKLVDKAAQSNLIHSNKADRIKSQLMTANK</sequence>
<reference key="1">
    <citation type="journal article" date="2008" name="Antimicrob. Agents Chemother.">
        <title>Mutated response regulator graR is responsible for phenotypic conversion of Staphylococcus aureus from heterogeneous vancomycin-intermediate resistance to vancomycin-intermediate resistance.</title>
        <authorList>
            <person name="Neoh H.-M."/>
            <person name="Cui L."/>
            <person name="Yuzawa H."/>
            <person name="Takeuchi F."/>
            <person name="Matsuo M."/>
            <person name="Hiramatsu K."/>
        </authorList>
    </citation>
    <scope>NUCLEOTIDE SEQUENCE [LARGE SCALE GENOMIC DNA]</scope>
    <source>
        <strain>Mu3 / ATCC 700698</strain>
    </source>
</reference>
<proteinExistence type="inferred from homology"/>
<dbReference type="EMBL" id="AP009324">
    <property type="protein sequence ID" value="BAF78456.1"/>
    <property type="molecule type" value="Genomic_DNA"/>
</dbReference>
<dbReference type="RefSeq" id="WP_001274017.1">
    <property type="nucleotide sequence ID" value="NZ_CTYB01000003.1"/>
</dbReference>
<dbReference type="SMR" id="A7X2Y8"/>
<dbReference type="GeneID" id="66839775"/>
<dbReference type="KEGG" id="saw:SAHV_1573"/>
<dbReference type="HOGENOM" id="CLU_160655_1_1_9"/>
<dbReference type="GO" id="GO:0005829">
    <property type="term" value="C:cytosol"/>
    <property type="evidence" value="ECO:0007669"/>
    <property type="project" value="TreeGrafter"/>
</dbReference>
<dbReference type="GO" id="GO:0015935">
    <property type="term" value="C:small ribosomal subunit"/>
    <property type="evidence" value="ECO:0007669"/>
    <property type="project" value="TreeGrafter"/>
</dbReference>
<dbReference type="GO" id="GO:0070181">
    <property type="term" value="F:small ribosomal subunit rRNA binding"/>
    <property type="evidence" value="ECO:0007669"/>
    <property type="project" value="TreeGrafter"/>
</dbReference>
<dbReference type="GO" id="GO:0003735">
    <property type="term" value="F:structural constituent of ribosome"/>
    <property type="evidence" value="ECO:0007669"/>
    <property type="project" value="InterPro"/>
</dbReference>
<dbReference type="GO" id="GO:0006412">
    <property type="term" value="P:translation"/>
    <property type="evidence" value="ECO:0007669"/>
    <property type="project" value="UniProtKB-UniRule"/>
</dbReference>
<dbReference type="Gene3D" id="1.20.58.110">
    <property type="entry name" value="Ribosomal protein S20"/>
    <property type="match status" value="1"/>
</dbReference>
<dbReference type="HAMAP" id="MF_00500">
    <property type="entry name" value="Ribosomal_bS20"/>
    <property type="match status" value="1"/>
</dbReference>
<dbReference type="InterPro" id="IPR002583">
    <property type="entry name" value="Ribosomal_bS20"/>
</dbReference>
<dbReference type="InterPro" id="IPR036510">
    <property type="entry name" value="Ribosomal_bS20_sf"/>
</dbReference>
<dbReference type="NCBIfam" id="TIGR00029">
    <property type="entry name" value="S20"/>
    <property type="match status" value="1"/>
</dbReference>
<dbReference type="PANTHER" id="PTHR33398">
    <property type="entry name" value="30S RIBOSOMAL PROTEIN S20"/>
    <property type="match status" value="1"/>
</dbReference>
<dbReference type="PANTHER" id="PTHR33398:SF1">
    <property type="entry name" value="SMALL RIBOSOMAL SUBUNIT PROTEIN BS20C"/>
    <property type="match status" value="1"/>
</dbReference>
<dbReference type="Pfam" id="PF01649">
    <property type="entry name" value="Ribosomal_S20p"/>
    <property type="match status" value="1"/>
</dbReference>
<dbReference type="SUPFAM" id="SSF46992">
    <property type="entry name" value="Ribosomal protein S20"/>
    <property type="match status" value="1"/>
</dbReference>
<name>RS20_STAA1</name>